<protein>
    <recommendedName>
        <fullName evidence="9 12">Retinol binding protein 4</fullName>
    </recommendedName>
    <alternativeName>
        <fullName evidence="8">Feline conceptus protein 1</fullName>
        <shortName evidence="9">fCP1</shortName>
    </alternativeName>
    <alternativeName>
        <fullName evidence="10">Plasma retinol-binding protein</fullName>
        <shortName evidence="10">PRBP</shortName>
        <shortName evidence="8">RBP</shortName>
    </alternativeName>
</protein>
<proteinExistence type="evidence at protein level"/>
<keyword id="KW-0903">Direct protein sequencing</keyword>
<keyword id="KW-1015">Disulfide bond</keyword>
<keyword id="KW-0488">Methylation</keyword>
<keyword id="KW-1185">Reference proteome</keyword>
<keyword id="KW-0683">Retinol-binding</keyword>
<keyword id="KW-0964">Secreted</keyword>
<keyword id="KW-0732">Signal</keyword>
<keyword id="KW-0813">Transport</keyword>
<keyword id="KW-0845">Vitamin A</keyword>
<dbReference type="EMBL" id="AB771450">
    <property type="protein sequence ID" value="BAN13410.1"/>
    <property type="molecule type" value="mRNA"/>
</dbReference>
<dbReference type="RefSeq" id="NP_001277178.1">
    <property type="nucleotide sequence ID" value="NM_001290249.1"/>
</dbReference>
<dbReference type="SMR" id="M5AXY1"/>
<dbReference type="STRING" id="9685.ENSFCAP00000045741"/>
<dbReference type="PaxDb" id="9685-ENSFCAP00000018418"/>
<dbReference type="Ensembl" id="ENSFCAT00000064276.1">
    <property type="protein sequence ID" value="ENSFCAP00000045095.1"/>
    <property type="gene ID" value="ENSFCAG00000045563.2"/>
</dbReference>
<dbReference type="GeneID" id="101094377"/>
<dbReference type="KEGG" id="fca:101094377"/>
<dbReference type="CTD" id="5950"/>
<dbReference type="eggNOG" id="ENOG502RXEW">
    <property type="taxonomic scope" value="Eukaryota"/>
</dbReference>
<dbReference type="GeneTree" id="ENSGT00510000047107"/>
<dbReference type="InParanoid" id="M5AXY1"/>
<dbReference type="OrthoDB" id="9923952at2759"/>
<dbReference type="Proteomes" id="UP000011712">
    <property type="component" value="Chromosome D2"/>
</dbReference>
<dbReference type="Bgee" id="ENSFCAG00000045563">
    <property type="expression patterns" value="Expressed in liver and 10 other cell types or tissues"/>
</dbReference>
<dbReference type="GO" id="GO:0005615">
    <property type="term" value="C:extracellular space"/>
    <property type="evidence" value="ECO:0000314"/>
    <property type="project" value="UniProtKB"/>
</dbReference>
<dbReference type="GO" id="GO:0016918">
    <property type="term" value="F:retinal binding"/>
    <property type="evidence" value="ECO:0007669"/>
    <property type="project" value="UniProtKB-KW"/>
</dbReference>
<dbReference type="GO" id="GO:0019841">
    <property type="term" value="F:retinol binding"/>
    <property type="evidence" value="ECO:0000250"/>
    <property type="project" value="UniProtKB"/>
</dbReference>
<dbReference type="GO" id="GO:0034632">
    <property type="term" value="F:retinol transmembrane transporter activity"/>
    <property type="evidence" value="ECO:0007669"/>
    <property type="project" value="InterPro"/>
</dbReference>
<dbReference type="GO" id="GO:0034633">
    <property type="term" value="P:retinol transport"/>
    <property type="evidence" value="ECO:0000318"/>
    <property type="project" value="GO_Central"/>
</dbReference>
<dbReference type="CDD" id="cd00743">
    <property type="entry name" value="lipocalin_RBP_like"/>
    <property type="match status" value="1"/>
</dbReference>
<dbReference type="FunFam" id="2.40.128.20:FF:000004">
    <property type="entry name" value="Retinol-binding protein 4"/>
    <property type="match status" value="1"/>
</dbReference>
<dbReference type="Gene3D" id="2.40.128.20">
    <property type="match status" value="1"/>
</dbReference>
<dbReference type="InterPro" id="IPR012674">
    <property type="entry name" value="Calycin"/>
</dbReference>
<dbReference type="InterPro" id="IPR022271">
    <property type="entry name" value="Lipocalin_ApoD"/>
</dbReference>
<dbReference type="InterPro" id="IPR022272">
    <property type="entry name" value="Lipocalin_CS"/>
</dbReference>
<dbReference type="InterPro" id="IPR000566">
    <property type="entry name" value="Lipocln_cytosolic_FA-bd_dom"/>
</dbReference>
<dbReference type="InterPro" id="IPR002449">
    <property type="entry name" value="Retinol-bd/Purpurin"/>
</dbReference>
<dbReference type="PANTHER" id="PTHR11873">
    <property type="entry name" value="RETINOL-BINDING PROTEIN 4"/>
    <property type="match status" value="1"/>
</dbReference>
<dbReference type="PANTHER" id="PTHR11873:SF2">
    <property type="entry name" value="RETINOL-BINDING PROTEIN 4"/>
    <property type="match status" value="1"/>
</dbReference>
<dbReference type="Pfam" id="PF00061">
    <property type="entry name" value="Lipocalin"/>
    <property type="match status" value="1"/>
</dbReference>
<dbReference type="PIRSF" id="PIRSF036893">
    <property type="entry name" value="Lipocalin_ApoD"/>
    <property type="match status" value="1"/>
</dbReference>
<dbReference type="PIRSF" id="PIRSF500204">
    <property type="entry name" value="RBP_purpurin"/>
    <property type="match status" value="1"/>
</dbReference>
<dbReference type="PRINTS" id="PR00179">
    <property type="entry name" value="LIPOCALIN"/>
</dbReference>
<dbReference type="PRINTS" id="PR01174">
    <property type="entry name" value="RETINOLBNDNG"/>
</dbReference>
<dbReference type="SUPFAM" id="SSF50814">
    <property type="entry name" value="Lipocalins"/>
    <property type="match status" value="1"/>
</dbReference>
<dbReference type="PROSITE" id="PS00213">
    <property type="entry name" value="LIPOCALIN"/>
    <property type="match status" value="1"/>
</dbReference>
<feature type="signal peptide" evidence="6">
    <location>
        <begin position="1"/>
        <end position="18"/>
    </location>
</feature>
<feature type="chain" id="PRO_5004063033" description="Retinol binding protein 4" evidence="1 11">
    <location>
        <begin position="19"/>
        <end position="201"/>
    </location>
</feature>
<feature type="binding site" evidence="2">
    <location>
        <position position="116"/>
    </location>
    <ligand>
        <name>substrate</name>
    </ligand>
</feature>
<feature type="modified residue" description="Omega-N-methylarginine" evidence="3">
    <location>
        <position position="139"/>
    </location>
</feature>
<feature type="disulfide bond" evidence="1">
    <location>
        <begin position="22"/>
        <end position="178"/>
    </location>
</feature>
<feature type="disulfide bond" evidence="1">
    <location>
        <begin position="88"/>
        <end position="192"/>
    </location>
</feature>
<feature type="disulfide bond" evidence="1">
    <location>
        <begin position="138"/>
        <end position="147"/>
    </location>
</feature>
<name>RET4_FELCA</name>
<comment type="function">
    <text evidence="1">Retinol-binding protein that mediates retinol transport in blood plasma. Delivers retinol from the liver stores to the peripheral tissues. Transfers the bound all-trans retinol to STRA6, that then facilitates retinol transport across the cell membrane.</text>
</comment>
<comment type="subunit">
    <text evidence="1">Interacts with TTR. Interaction with TTR prevents its loss by filtration through the kidney glomeruli. Interacts with STRA6.</text>
</comment>
<comment type="subcellular location">
    <subcellularLocation>
        <location evidence="6">Secreted</location>
    </subcellularLocation>
</comment>
<comment type="tissue specificity">
    <text evidence="6 7">Highly expressed in liver. Also expressed in adipose tissue (PubMed:23719693). Expressed by endometrium from days 16-25 and by unattached chorioallantois from days 30-36 during pregnancy (PubMed:2015342).</text>
</comment>
<comment type="developmental stage">
    <text evidence="6">Secreted in fetal fluids. Present on day 25, decreases from days 30-39, and disappears by day 50. Expressed by blastocysts on days 10-25 during prenatal development, but disappears by day 50.</text>
</comment>
<comment type="similarity">
    <text evidence="4 5 10">Belongs to the calycin superfamily. Lipocalin family.</text>
</comment>
<sequence length="201" mass="22898">MAWVWALVLLAALGSARAERDCRVSSFRVKENFDKARFSGTWYAMAKKDPEGLFLQDNIVAEFSVDENGQMSATAKGRVRLLNNWDVCADMVGTFTDTEDSAKFKMKYWGVASFLQKGNDDHWIIDTDYDTYAVQYSCRLLNLDGTCADSYSFVFARDPNGLPPDVQKIVRQRQDELCLARQYRLIVHNGYCDGKSEQNIL</sequence>
<accession>M5AXY1</accession>
<accession>M3WVN1</accession>
<gene>
    <name evidence="9 12" type="primary">RBP4</name>
</gene>
<organism evidence="12">
    <name type="scientific">Felis catus</name>
    <name type="common">Cat</name>
    <name type="synonym">Felis silvestris catus</name>
    <dbReference type="NCBI Taxonomy" id="9685"/>
    <lineage>
        <taxon>Eukaryota</taxon>
        <taxon>Metazoa</taxon>
        <taxon>Chordata</taxon>
        <taxon>Craniata</taxon>
        <taxon>Vertebrata</taxon>
        <taxon>Euteleostomi</taxon>
        <taxon>Mammalia</taxon>
        <taxon>Eutheria</taxon>
        <taxon>Laurasiatheria</taxon>
        <taxon>Carnivora</taxon>
        <taxon>Feliformia</taxon>
        <taxon>Felidae</taxon>
        <taxon>Felinae</taxon>
        <taxon>Felis</taxon>
    </lineage>
</organism>
<evidence type="ECO:0000250" key="1">
    <source>
        <dbReference type="UniProtKB" id="P02753"/>
    </source>
</evidence>
<evidence type="ECO:0000250" key="2">
    <source>
        <dbReference type="UniProtKB" id="P27485"/>
    </source>
</evidence>
<evidence type="ECO:0000250" key="3">
    <source>
        <dbReference type="UniProtKB" id="Q00724"/>
    </source>
</evidence>
<evidence type="ECO:0000255" key="4"/>
<evidence type="ECO:0000255" key="5">
    <source>
        <dbReference type="RuleBase" id="RU003695"/>
    </source>
</evidence>
<evidence type="ECO:0000269" key="6">
    <source>
    </source>
</evidence>
<evidence type="ECO:0000269" key="7">
    <source>
    </source>
</evidence>
<evidence type="ECO:0000303" key="8">
    <source>
    </source>
</evidence>
<evidence type="ECO:0000303" key="9">
    <source>
    </source>
</evidence>
<evidence type="ECO:0000305" key="10"/>
<evidence type="ECO:0000305" key="11">
    <source>
    </source>
</evidence>
<evidence type="ECO:0000312" key="12">
    <source>
        <dbReference type="EMBL" id="BAN13410.1"/>
    </source>
</evidence>
<reference evidence="12" key="1">
    <citation type="journal article" date="2013" name="J. Vet. Med. Sci.">
        <title>Molecular characterization and tissue distribution of feline retinol-binding protein 4.</title>
        <authorList>
            <person name="Sasaki N."/>
            <person name="Ishibashi M."/>
            <person name="Soeta S."/>
        </authorList>
    </citation>
    <scope>NUCLEOTIDE SEQUENCE [MRNA]</scope>
    <scope>TISSUE SPECIFICITY</scope>
    <source>
        <tissue evidence="9 12">Liver</tissue>
    </source>
</reference>
<reference key="2">
    <citation type="journal article" date="2007" name="Genome Res.">
        <title>Initial sequence and comparative analysis of the cat genome.</title>
        <authorList>
            <person name="Pontius J.U."/>
            <person name="Mullikin J.C."/>
            <person name="Smith D.R."/>
            <person name="Lindblad-Toh K."/>
            <person name="Gnerre S."/>
            <person name="Clamp M."/>
            <person name="Chang J."/>
            <person name="Stephens R."/>
            <person name="Neelam B."/>
            <person name="Volfovsky N."/>
            <person name="Schaffer A.A."/>
            <person name="Agarwala R."/>
            <person name="Narfstrom K."/>
            <person name="Murphy W.J."/>
            <person name="Giger U."/>
            <person name="Roca A.L."/>
            <person name="Antunes A."/>
            <person name="Menotti-Raymond M."/>
            <person name="Yuhki N."/>
            <person name="Pecon-Slattery J."/>
            <person name="Johnson W.E."/>
            <person name="Bourque G."/>
            <person name="Tesler G."/>
            <person name="O'Brien S.J."/>
        </authorList>
    </citation>
    <scope>NUCLEOTIDE SEQUENCE [LARGE SCALE GENOMIC DNA]</scope>
    <source>
        <strain>Abyssinian</strain>
    </source>
</reference>
<reference key="3">
    <citation type="journal article" date="1991" name="Biol. Reprod.">
        <title>Characterization of feline conceptus proteins during pregnancy.</title>
        <authorList>
            <person name="Thatcher M.D."/>
            <person name="Shille V.M."/>
            <person name="Fliss M.F."/>
            <person name="Bazer F.W."/>
            <person name="Sisum W."/>
            <person name="Randal S."/>
        </authorList>
    </citation>
    <scope>PROTEIN SEQUENCE OF 19-46</scope>
    <scope>SUBCELLULAR LOCATION</scope>
    <scope>TISSUE SPECIFICITY</scope>
    <scope>DEVELOPMENTAL STAGE</scope>
</reference>